<keyword id="KW-1003">Cell membrane</keyword>
<keyword id="KW-0342">GTP-binding</keyword>
<keyword id="KW-0378">Hydrolase</keyword>
<keyword id="KW-0449">Lipoprotein</keyword>
<keyword id="KW-0472">Membrane</keyword>
<keyword id="KW-0488">Methylation</keyword>
<keyword id="KW-0547">Nucleotide-binding</keyword>
<keyword id="KW-0636">Prenylation</keyword>
<keyword id="KW-1185">Reference proteome</keyword>
<protein>
    <recommendedName>
        <fullName>Ras-related protein ralB-A</fullName>
        <ecNumber evidence="9">3.6.5.2</ecNumber>
    </recommendedName>
    <alternativeName>
        <fullName>XRalB-A</fullName>
    </alternativeName>
</protein>
<feature type="chain" id="PRO_0000082701" description="Ras-related protein ralB-A">
    <location>
        <begin position="1"/>
        <end position="203"/>
    </location>
</feature>
<feature type="propeptide" id="PRO_0000281354" description="Removed in mature form" evidence="1">
    <location>
        <begin position="204"/>
        <end position="206"/>
    </location>
</feature>
<feature type="region of interest" description="Disordered" evidence="4">
    <location>
        <begin position="180"/>
        <end position="206"/>
    </location>
</feature>
<feature type="short sequence motif" description="Effector region">
    <location>
        <begin position="43"/>
        <end position="51"/>
    </location>
</feature>
<feature type="compositionally biased region" description="Basic and acidic residues" evidence="4">
    <location>
        <begin position="180"/>
        <end position="189"/>
    </location>
</feature>
<feature type="compositionally biased region" description="Basic residues" evidence="4">
    <location>
        <begin position="190"/>
        <end position="200"/>
    </location>
</feature>
<feature type="binding site" evidence="1">
    <location>
        <begin position="21"/>
        <end position="28"/>
    </location>
    <ligand>
        <name>GTP</name>
        <dbReference type="ChEBI" id="CHEBI:37565"/>
    </ligand>
</feature>
<feature type="binding site" evidence="1">
    <location>
        <begin position="68"/>
        <end position="72"/>
    </location>
    <ligand>
        <name>GTP</name>
        <dbReference type="ChEBI" id="CHEBI:37565"/>
    </ligand>
</feature>
<feature type="binding site" evidence="1">
    <location>
        <begin position="128"/>
        <end position="131"/>
    </location>
    <ligand>
        <name>GTP</name>
        <dbReference type="ChEBI" id="CHEBI:37565"/>
    </ligand>
</feature>
<feature type="modified residue" description="Cysteine methyl ester" evidence="1">
    <location>
        <position position="203"/>
    </location>
</feature>
<feature type="lipid moiety-binding region" description="S-geranylgeranyl cysteine" evidence="1">
    <location>
        <position position="203"/>
    </location>
</feature>
<feature type="mutagenesis site" description="Constitutively active. Displays defective GTPase activity and fails to respond to ral-GAP. Still able to bind ralbp1. Injection into embryos disrupts the actin cytoskeleton and the localization of pigment granules." evidence="5 6 7">
    <original>G</original>
    <variation>V</variation>
    <location>
        <position position="23"/>
    </location>
</feature>
<feature type="mutagenesis site" description="Dominant negative. Shows decreased GTP affinity. Injection into embryos disrupts gastrulation." evidence="5 6 7">
    <original>S</original>
    <variation>N</variation>
    <location>
        <position position="28"/>
    </location>
</feature>
<feature type="mutagenesis site" description="Results are conflicting as to whether binding of the GTP-bound form to ralbp1 is abolished." evidence="5 7">
    <original>D</original>
    <variation>N</variation>
    <location>
        <position position="49"/>
    </location>
</feature>
<feature type="mutagenesis site" description="Defective in membrane targeting." evidence="7">
    <original>C</original>
    <variation>S</variation>
    <location>
        <position position="203"/>
    </location>
</feature>
<accession>Q9YH09</accession>
<accession>Q32N67</accession>
<gene>
    <name type="primary">ralb-a</name>
</gene>
<proteinExistence type="evidence at protein level"/>
<sequence>MAANKNKNQSSLVLHKVIMVGSGGVGKSALTLQFMYDEFVEDYEPTKADSYRKKVVLDGEEVQIDILDTAGQEDYAAIRDNYFRSGEGFLLVFSITEHESFTATAEFREQILRVKAEEDKIPLLIVGNKSDLEDRRQVPMDEARGKAEEWGVQYVETSAKTRANVDKVFFDLMREIRTKKMSENKDKNGKKSGKSKKGFKQRCCLL</sequence>
<dbReference type="EC" id="3.6.5.2" evidence="9"/>
<dbReference type="EMBL" id="Y16259">
    <property type="protein sequence ID" value="CAA76143.1"/>
    <property type="molecule type" value="mRNA"/>
</dbReference>
<dbReference type="EMBL" id="BC108805">
    <property type="protein sequence ID" value="AAI08806.1"/>
    <property type="molecule type" value="mRNA"/>
</dbReference>
<dbReference type="RefSeq" id="NP_001084154.1">
    <property type="nucleotide sequence ID" value="NM_001090685.1"/>
</dbReference>
<dbReference type="SMR" id="Q9YH09"/>
<dbReference type="IntAct" id="Q9YH09">
    <property type="interactions" value="1"/>
</dbReference>
<dbReference type="DNASU" id="399338"/>
<dbReference type="GeneID" id="399338"/>
<dbReference type="KEGG" id="xla:399338"/>
<dbReference type="AGR" id="Xenbase:XB-GENE-6254042"/>
<dbReference type="CTD" id="399338"/>
<dbReference type="Xenbase" id="XB-GENE-6254042">
    <property type="gene designation" value="ralb.L"/>
</dbReference>
<dbReference type="OMA" id="FRERCCI"/>
<dbReference type="OrthoDB" id="5976022at2759"/>
<dbReference type="Proteomes" id="UP000186698">
    <property type="component" value="Chromosome 9_10L"/>
</dbReference>
<dbReference type="Bgee" id="399338">
    <property type="expression patterns" value="Expressed in egg cell and 19 other cell types or tissues"/>
</dbReference>
<dbReference type="GO" id="GO:0016020">
    <property type="term" value="C:membrane"/>
    <property type="evidence" value="ECO:0000303"/>
    <property type="project" value="UniProtKB"/>
</dbReference>
<dbReference type="GO" id="GO:0030496">
    <property type="term" value="C:midbody"/>
    <property type="evidence" value="ECO:0007669"/>
    <property type="project" value="UniProtKB-SubCell"/>
</dbReference>
<dbReference type="GO" id="GO:0005886">
    <property type="term" value="C:plasma membrane"/>
    <property type="evidence" value="ECO:0000318"/>
    <property type="project" value="GO_Central"/>
</dbReference>
<dbReference type="GO" id="GO:0003925">
    <property type="term" value="F:G protein activity"/>
    <property type="evidence" value="ECO:0007669"/>
    <property type="project" value="UniProtKB-EC"/>
</dbReference>
<dbReference type="GO" id="GO:0019003">
    <property type="term" value="F:GDP binding"/>
    <property type="evidence" value="ECO:0000318"/>
    <property type="project" value="GO_Central"/>
</dbReference>
<dbReference type="GO" id="GO:0005525">
    <property type="term" value="F:GTP binding"/>
    <property type="evidence" value="ECO:0000318"/>
    <property type="project" value="GO_Central"/>
</dbReference>
<dbReference type="GO" id="GO:0003924">
    <property type="term" value="F:GTPase activity"/>
    <property type="evidence" value="ECO:0000318"/>
    <property type="project" value="GO_Central"/>
</dbReference>
<dbReference type="GO" id="GO:0030036">
    <property type="term" value="P:actin cytoskeleton organization"/>
    <property type="evidence" value="ECO:0000315"/>
    <property type="project" value="UniProtKB"/>
</dbReference>
<dbReference type="GO" id="GO:0008543">
    <property type="term" value="P:fibroblast growth factor receptor signaling pathway"/>
    <property type="evidence" value="ECO:0000314"/>
    <property type="project" value="UniProtKB"/>
</dbReference>
<dbReference type="GO" id="GO:0007265">
    <property type="term" value="P:Ras protein signal transduction"/>
    <property type="evidence" value="ECO:0000314"/>
    <property type="project" value="UniProtKB"/>
</dbReference>
<dbReference type="GO" id="GO:0048070">
    <property type="term" value="P:regulation of developmental pigmentation"/>
    <property type="evidence" value="ECO:0000315"/>
    <property type="project" value="UniProtKB"/>
</dbReference>
<dbReference type="GO" id="GO:0007264">
    <property type="term" value="P:small GTPase-mediated signal transduction"/>
    <property type="evidence" value="ECO:0000353"/>
    <property type="project" value="UniProtKB"/>
</dbReference>
<dbReference type="CDD" id="cd04139">
    <property type="entry name" value="RalA_RalB"/>
    <property type="match status" value="1"/>
</dbReference>
<dbReference type="FunFam" id="3.40.50.300:FF:000203">
    <property type="entry name" value="Putative ras-related protein ral-a"/>
    <property type="match status" value="1"/>
</dbReference>
<dbReference type="Gene3D" id="3.40.50.300">
    <property type="entry name" value="P-loop containing nucleotide triphosphate hydrolases"/>
    <property type="match status" value="1"/>
</dbReference>
<dbReference type="InterPro" id="IPR027417">
    <property type="entry name" value="P-loop_NTPase"/>
</dbReference>
<dbReference type="InterPro" id="IPR005225">
    <property type="entry name" value="Small_GTP-bd"/>
</dbReference>
<dbReference type="InterPro" id="IPR001806">
    <property type="entry name" value="Small_GTPase"/>
</dbReference>
<dbReference type="InterPro" id="IPR020849">
    <property type="entry name" value="Small_GTPase_Ras-type"/>
</dbReference>
<dbReference type="NCBIfam" id="TIGR00231">
    <property type="entry name" value="small_GTP"/>
    <property type="match status" value="1"/>
</dbReference>
<dbReference type="PANTHER" id="PTHR24070">
    <property type="entry name" value="RAS, DI-RAS, AND RHEB FAMILY MEMBERS OF SMALL GTPASE SUPERFAMILY"/>
    <property type="match status" value="1"/>
</dbReference>
<dbReference type="Pfam" id="PF00071">
    <property type="entry name" value="Ras"/>
    <property type="match status" value="1"/>
</dbReference>
<dbReference type="PRINTS" id="PR00449">
    <property type="entry name" value="RASTRNSFRMNG"/>
</dbReference>
<dbReference type="SMART" id="SM00175">
    <property type="entry name" value="RAB"/>
    <property type="match status" value="1"/>
</dbReference>
<dbReference type="SMART" id="SM00176">
    <property type="entry name" value="RAN"/>
    <property type="match status" value="1"/>
</dbReference>
<dbReference type="SMART" id="SM00173">
    <property type="entry name" value="RAS"/>
    <property type="match status" value="1"/>
</dbReference>
<dbReference type="SMART" id="SM00174">
    <property type="entry name" value="RHO"/>
    <property type="match status" value="1"/>
</dbReference>
<dbReference type="SUPFAM" id="SSF52540">
    <property type="entry name" value="P-loop containing nucleoside triphosphate hydrolases"/>
    <property type="match status" value="1"/>
</dbReference>
<dbReference type="PROSITE" id="PS51421">
    <property type="entry name" value="RAS"/>
    <property type="match status" value="1"/>
</dbReference>
<reference key="1">
    <citation type="journal article" date="1999" name="Dev. Biol.">
        <title>Characterization of Xenopus Ral B and its involvement in F-actin control during early development.</title>
        <authorList>
            <person name="Moreau J."/>
            <person name="Lebreton S."/>
            <person name="Iouzalen N."/>
            <person name="Mechali M."/>
        </authorList>
    </citation>
    <scope>NUCLEOTIDE SEQUENCE [MRNA]</scope>
    <scope>FUNCTION</scope>
    <scope>TISSUE SPECIFICITY</scope>
    <scope>DEVELOPMENTAL STAGE</scope>
    <scope>MUTAGENESIS OF GLY-23; SER-28 AND ASP-49</scope>
    <source>
        <tissue>Oocyte</tissue>
    </source>
</reference>
<reference key="2">
    <citation type="submission" date="2005-11" db="EMBL/GenBank/DDBJ databases">
        <authorList>
            <consortium name="NIH - Xenopus Gene Collection (XGC) project"/>
        </authorList>
    </citation>
    <scope>NUCLEOTIDE SEQUENCE [LARGE SCALE MRNA]</scope>
    <source>
        <tissue>Oocyte</tissue>
    </source>
</reference>
<reference key="3">
    <citation type="journal article" date="1998" name="Biochem. Biophys. Res. Commun.">
        <title>Identification and characterization in Xenopus of XsmgGDS, a RalB-binding protein.</title>
        <authorList>
            <person name="Iouzalen N."/>
            <person name="Camonis J."/>
            <person name="Moreau J."/>
        </authorList>
    </citation>
    <scope>INTERACTION WITH RALBP1 AND RAP1GDS1</scope>
</reference>
<reference key="4">
    <citation type="journal article" date="2003" name="J. Cell Sci.">
        <title>Control of embryonic Xenopus morphogenesis by a Ral-GDS/Xral branch of the Ras signalling pathway.</title>
        <authorList>
            <person name="Lebreton S."/>
            <person name="Boissel L."/>
            <person name="Moreau J."/>
        </authorList>
    </citation>
    <scope>FUNCTION</scope>
    <scope>DEVELOPMENTAL STAGE</scope>
    <scope>MUTAGENESIS OF GLY-23 AND SER-28</scope>
</reference>
<reference key="5">
    <citation type="journal article" date="2004" name="Mech. Dev.">
        <title>RLIP mediates downstream signalling from RalB to the actin cytoskeleton during Xenopus early development.</title>
        <authorList>
            <person name="Lebreton S."/>
            <person name="Boissel L."/>
            <person name="Iouzalen N."/>
            <person name="Moreau J."/>
        </authorList>
    </citation>
    <scope>FUNCTION</scope>
    <scope>INTERACTION WITH RALBP1</scope>
    <scope>MUTAGENESIS OF GLY-23; SER-28; ASP-49 AND CYS-203</scope>
    <source>
        <tissue>Oocyte</tissue>
    </source>
</reference>
<comment type="function">
    <text evidence="2 3 5 6 7">Multifunctional GTPase involved in a variety of cellular processes including gene expression, cell migration, cell proliferation, oncogenic transformation and membrane trafficking. Accomplishes its multiple functions by interacting with distinct downstream effectors. Acts as a GTP sensor for GTP-dependent exocytosis of dense core vesicles (By similarity). Required both to stabilize the assembly of the exocyst complex and to localize functional exocyst complexes to the leading edge of migrating cells (By similarity). Required for suppression of apoptosis (By similarity). In late stages of cytokinesis, upon completion of the bridge formation between dividing cells, mediates exocyst recruitment to the midbody to drive abscission (By similarity). Regulates the actin cytoskeleton to play a role in gastrulation or neurulation. During the cleavage stages, the GTP-bound form induces a cortical reaction that affects the localization of pigment granules. Activated by the FGF pathway via ras and ral-GDS, but independently of raf. Directs ralbp1 to the plasma membrane (PubMed:10328920, PubMed:14576358, PubMed:15511640). Involved in ligand-dependent receptor mediated endocytosis of the EGF and insulin receptors (By similarity).</text>
</comment>
<comment type="catalytic activity">
    <reaction evidence="9">
        <text>GTP + H2O = GDP + phosphate + H(+)</text>
        <dbReference type="Rhea" id="RHEA:19669"/>
        <dbReference type="ChEBI" id="CHEBI:15377"/>
        <dbReference type="ChEBI" id="CHEBI:15378"/>
        <dbReference type="ChEBI" id="CHEBI:37565"/>
        <dbReference type="ChEBI" id="CHEBI:43474"/>
        <dbReference type="ChEBI" id="CHEBI:58189"/>
        <dbReference type="EC" id="3.6.5.2"/>
    </reaction>
</comment>
<comment type="subunit">
    <text evidence="7 8">Interacts with ralbp1 and rap1gds1.</text>
</comment>
<comment type="subcellular location">
    <subcellularLocation>
        <location evidence="2">Cell membrane</location>
        <topology evidence="2">Lipid-anchor</topology>
        <orientation evidence="2">Cytoplasmic side</orientation>
    </subcellularLocation>
    <subcellularLocation>
        <location evidence="2">Midbody</location>
    </subcellularLocation>
    <text evidence="2">During late cytokinesis, enriched at the midbody.</text>
</comment>
<comment type="tissue specificity">
    <text evidence="5">Weakly expressed in adult tissues and highest levels were found in heart, brain and testes.</text>
</comment>
<comment type="developmental stage">
    <text evidence="5 6">Expressed both maternally and zygotically. Detected from stage I oocyte up to the tadpole stage. Present at a relatively high level until the gastrula stage, after which expression levels decrease. During gastrulation, levels of protein activation are highest in the embryonic mesodermal region.</text>
</comment>
<comment type="similarity">
    <text evidence="9">Belongs to the small GTPase superfamily. Ras family.</text>
</comment>
<name>RALBA_XENLA</name>
<organism>
    <name type="scientific">Xenopus laevis</name>
    <name type="common">African clawed frog</name>
    <dbReference type="NCBI Taxonomy" id="8355"/>
    <lineage>
        <taxon>Eukaryota</taxon>
        <taxon>Metazoa</taxon>
        <taxon>Chordata</taxon>
        <taxon>Craniata</taxon>
        <taxon>Vertebrata</taxon>
        <taxon>Euteleostomi</taxon>
        <taxon>Amphibia</taxon>
        <taxon>Batrachia</taxon>
        <taxon>Anura</taxon>
        <taxon>Pipoidea</taxon>
        <taxon>Pipidae</taxon>
        <taxon>Xenopodinae</taxon>
        <taxon>Xenopus</taxon>
        <taxon>Xenopus</taxon>
    </lineage>
</organism>
<evidence type="ECO:0000250" key="1"/>
<evidence type="ECO:0000250" key="2">
    <source>
        <dbReference type="UniProtKB" id="P11234"/>
    </source>
</evidence>
<evidence type="ECO:0000250" key="3">
    <source>
        <dbReference type="UniProtKB" id="P36860"/>
    </source>
</evidence>
<evidence type="ECO:0000256" key="4">
    <source>
        <dbReference type="SAM" id="MobiDB-lite"/>
    </source>
</evidence>
<evidence type="ECO:0000269" key="5">
    <source>
    </source>
</evidence>
<evidence type="ECO:0000269" key="6">
    <source>
    </source>
</evidence>
<evidence type="ECO:0000269" key="7">
    <source>
    </source>
</evidence>
<evidence type="ECO:0000269" key="8">
    <source>
    </source>
</evidence>
<evidence type="ECO:0000305" key="9"/>